<protein>
    <recommendedName>
        <fullName evidence="3">U-scoloptoxin(01)-Tl1a</fullName>
        <shortName evidence="3">U-SLPTX(01)-Tl1a</shortName>
    </recommendedName>
</protein>
<name>TX11A_THELO</name>
<accession>P0DPW3</accession>
<reference key="1">
    <citation type="journal article" date="2014" name="Mol. Biol. Evol.">
        <title>Clawing through evolution: toxin diversification and convergence in the ancient lineage Chilopoda (centipedes).</title>
        <authorList>
            <person name="Undheim E.A."/>
            <person name="Jones A."/>
            <person name="Clauser K.R."/>
            <person name="Holland J.W."/>
            <person name="Pineda S.S."/>
            <person name="King G.F."/>
            <person name="Fry B.G."/>
        </authorList>
    </citation>
    <scope>NUCLEOTIDE SEQUENCE [MRNA]</scope>
    <scope>NOMENCLATURE</scope>
    <source>
        <tissue>Venom gland</tissue>
    </source>
</reference>
<comment type="subcellular location">
    <subcellularLocation>
        <location evidence="5">Secreted</location>
    </subcellularLocation>
</comment>
<comment type="tissue specificity">
    <text evidence="5">Expressed by the venom gland.</text>
</comment>
<comment type="PTM">
    <text evidence="4">Contains 3 disulfide bonds.</text>
</comment>
<comment type="similarity">
    <text evidence="4">Belongs to the scoloptoxin-01 family.</text>
</comment>
<comment type="caution">
    <text evidence="5">All T.longicornis family members described in 'Undeheim et al., 2014' have not been imported into UniProtKB. Please, refer to this paper to access them.</text>
</comment>
<comment type="online information" name="National Center for Biotechnology Information (NCBI)">
    <link uri="https://www.ncbi.nlm.nih.gov/nuccore/GASR01000111"/>
</comment>
<organism>
    <name type="scientific">Thereuopoda longicornis</name>
    <name type="common">Long-legged centipede</name>
    <dbReference type="NCBI Taxonomy" id="353555"/>
    <lineage>
        <taxon>Eukaryota</taxon>
        <taxon>Metazoa</taxon>
        <taxon>Ecdysozoa</taxon>
        <taxon>Arthropoda</taxon>
        <taxon>Myriapoda</taxon>
        <taxon>Chilopoda</taxon>
        <taxon>Notostigmophora</taxon>
        <taxon>Scutigeromorpha</taxon>
        <taxon>Scutigeridae</taxon>
        <taxon>Thereuopoda</taxon>
    </lineage>
</organism>
<sequence length="88" mass="9753">MSVYGLLSLLIFIVLAVNTSNGDPGKDCSEKEEYLYDSSNCDIFYECDESLKPQRMMCGPGTGWNQDKLVCDFLTNIDCTRGGKVAPK</sequence>
<dbReference type="SMR" id="P0DPW3"/>
<dbReference type="GO" id="GO:0005576">
    <property type="term" value="C:extracellular region"/>
    <property type="evidence" value="ECO:0007669"/>
    <property type="project" value="UniProtKB-SubCell"/>
</dbReference>
<dbReference type="GO" id="GO:0008061">
    <property type="term" value="F:chitin binding"/>
    <property type="evidence" value="ECO:0007669"/>
    <property type="project" value="UniProtKB-KW"/>
</dbReference>
<dbReference type="GO" id="GO:0090729">
    <property type="term" value="F:toxin activity"/>
    <property type="evidence" value="ECO:0007669"/>
    <property type="project" value="UniProtKB-KW"/>
</dbReference>
<dbReference type="Gene3D" id="2.170.140.10">
    <property type="entry name" value="Chitin binding domain"/>
    <property type="match status" value="1"/>
</dbReference>
<dbReference type="InterPro" id="IPR002557">
    <property type="entry name" value="Chitin-bd_dom"/>
</dbReference>
<dbReference type="InterPro" id="IPR036508">
    <property type="entry name" value="Chitin-bd_dom_sf"/>
</dbReference>
<dbReference type="Pfam" id="PF01607">
    <property type="entry name" value="CBM_14"/>
    <property type="match status" value="1"/>
</dbReference>
<dbReference type="SMART" id="SM00494">
    <property type="entry name" value="ChtBD2"/>
    <property type="match status" value="1"/>
</dbReference>
<dbReference type="SUPFAM" id="SSF57625">
    <property type="entry name" value="Invertebrate chitin-binding proteins"/>
    <property type="match status" value="1"/>
</dbReference>
<dbReference type="PROSITE" id="PS50940">
    <property type="entry name" value="CHIT_BIND_II"/>
    <property type="match status" value="1"/>
</dbReference>
<feature type="signal peptide" evidence="1">
    <location>
        <begin position="1"/>
        <end position="16"/>
    </location>
</feature>
<feature type="chain" id="PRO_0000446689" description="U-scoloptoxin(01)-Tl1a" evidence="4">
    <location>
        <begin position="17"/>
        <end position="88"/>
    </location>
</feature>
<feature type="domain" description="Chitin-binding type-2" evidence="2">
    <location>
        <begin position="25"/>
        <end position="81"/>
    </location>
</feature>
<feature type="disulfide bond" evidence="2">
    <location>
        <begin position="58"/>
        <end position="71"/>
    </location>
</feature>
<evidence type="ECO:0000255" key="1"/>
<evidence type="ECO:0000255" key="2">
    <source>
        <dbReference type="PROSITE-ProRule" id="PRU00144"/>
    </source>
</evidence>
<evidence type="ECO:0000303" key="3">
    <source>
    </source>
</evidence>
<evidence type="ECO:0000305" key="4"/>
<evidence type="ECO:0000305" key="5">
    <source>
    </source>
</evidence>
<keyword id="KW-0147">Chitin-binding</keyword>
<keyword id="KW-1015">Disulfide bond</keyword>
<keyword id="KW-0964">Secreted</keyword>
<keyword id="KW-0732">Signal</keyword>
<keyword id="KW-0800">Toxin</keyword>
<proteinExistence type="inferred from homology"/>